<name>RL1_XYLFT</name>
<dbReference type="EMBL" id="AE009442">
    <property type="protein sequence ID" value="AAO29833.1"/>
    <property type="molecule type" value="Genomic_DNA"/>
</dbReference>
<dbReference type="RefSeq" id="WP_004090730.1">
    <property type="nucleotide sequence ID" value="NC_004556.1"/>
</dbReference>
<dbReference type="SMR" id="Q87A29"/>
<dbReference type="GeneID" id="93905865"/>
<dbReference type="KEGG" id="xft:PD_2004"/>
<dbReference type="HOGENOM" id="CLU_062853_0_0_6"/>
<dbReference type="Proteomes" id="UP000002516">
    <property type="component" value="Chromosome"/>
</dbReference>
<dbReference type="GO" id="GO:0022625">
    <property type="term" value="C:cytosolic large ribosomal subunit"/>
    <property type="evidence" value="ECO:0007669"/>
    <property type="project" value="TreeGrafter"/>
</dbReference>
<dbReference type="GO" id="GO:0019843">
    <property type="term" value="F:rRNA binding"/>
    <property type="evidence" value="ECO:0007669"/>
    <property type="project" value="UniProtKB-UniRule"/>
</dbReference>
<dbReference type="GO" id="GO:0003735">
    <property type="term" value="F:structural constituent of ribosome"/>
    <property type="evidence" value="ECO:0007669"/>
    <property type="project" value="InterPro"/>
</dbReference>
<dbReference type="GO" id="GO:0000049">
    <property type="term" value="F:tRNA binding"/>
    <property type="evidence" value="ECO:0007669"/>
    <property type="project" value="UniProtKB-KW"/>
</dbReference>
<dbReference type="GO" id="GO:0006417">
    <property type="term" value="P:regulation of translation"/>
    <property type="evidence" value="ECO:0007669"/>
    <property type="project" value="UniProtKB-KW"/>
</dbReference>
<dbReference type="GO" id="GO:0006412">
    <property type="term" value="P:translation"/>
    <property type="evidence" value="ECO:0007669"/>
    <property type="project" value="UniProtKB-UniRule"/>
</dbReference>
<dbReference type="CDD" id="cd00403">
    <property type="entry name" value="Ribosomal_L1"/>
    <property type="match status" value="1"/>
</dbReference>
<dbReference type="FunFam" id="3.40.50.790:FF:000001">
    <property type="entry name" value="50S ribosomal protein L1"/>
    <property type="match status" value="1"/>
</dbReference>
<dbReference type="Gene3D" id="3.30.190.20">
    <property type="match status" value="1"/>
</dbReference>
<dbReference type="Gene3D" id="3.40.50.790">
    <property type="match status" value="1"/>
</dbReference>
<dbReference type="HAMAP" id="MF_01318_B">
    <property type="entry name" value="Ribosomal_uL1_B"/>
    <property type="match status" value="1"/>
</dbReference>
<dbReference type="InterPro" id="IPR005878">
    <property type="entry name" value="Ribosom_uL1_bac-type"/>
</dbReference>
<dbReference type="InterPro" id="IPR002143">
    <property type="entry name" value="Ribosomal_uL1"/>
</dbReference>
<dbReference type="InterPro" id="IPR023674">
    <property type="entry name" value="Ribosomal_uL1-like"/>
</dbReference>
<dbReference type="InterPro" id="IPR028364">
    <property type="entry name" value="Ribosomal_uL1/biogenesis"/>
</dbReference>
<dbReference type="InterPro" id="IPR016095">
    <property type="entry name" value="Ribosomal_uL1_3-a/b-sand"/>
</dbReference>
<dbReference type="InterPro" id="IPR023673">
    <property type="entry name" value="Ribosomal_uL1_CS"/>
</dbReference>
<dbReference type="NCBIfam" id="TIGR01169">
    <property type="entry name" value="rplA_bact"/>
    <property type="match status" value="1"/>
</dbReference>
<dbReference type="PANTHER" id="PTHR36427">
    <property type="entry name" value="54S RIBOSOMAL PROTEIN L1, MITOCHONDRIAL"/>
    <property type="match status" value="1"/>
</dbReference>
<dbReference type="PANTHER" id="PTHR36427:SF3">
    <property type="entry name" value="LARGE RIBOSOMAL SUBUNIT PROTEIN UL1M"/>
    <property type="match status" value="1"/>
</dbReference>
<dbReference type="Pfam" id="PF00687">
    <property type="entry name" value="Ribosomal_L1"/>
    <property type="match status" value="1"/>
</dbReference>
<dbReference type="PIRSF" id="PIRSF002155">
    <property type="entry name" value="Ribosomal_L1"/>
    <property type="match status" value="1"/>
</dbReference>
<dbReference type="SUPFAM" id="SSF56808">
    <property type="entry name" value="Ribosomal protein L1"/>
    <property type="match status" value="1"/>
</dbReference>
<dbReference type="PROSITE" id="PS01199">
    <property type="entry name" value="RIBOSOMAL_L1"/>
    <property type="match status" value="1"/>
</dbReference>
<accession>Q87A29</accession>
<organism>
    <name type="scientific">Xylella fastidiosa (strain Temecula1 / ATCC 700964)</name>
    <dbReference type="NCBI Taxonomy" id="183190"/>
    <lineage>
        <taxon>Bacteria</taxon>
        <taxon>Pseudomonadati</taxon>
        <taxon>Pseudomonadota</taxon>
        <taxon>Gammaproteobacteria</taxon>
        <taxon>Lysobacterales</taxon>
        <taxon>Lysobacteraceae</taxon>
        <taxon>Xylella</taxon>
    </lineage>
</organism>
<evidence type="ECO:0000255" key="1">
    <source>
        <dbReference type="HAMAP-Rule" id="MF_01318"/>
    </source>
</evidence>
<evidence type="ECO:0000305" key="2"/>
<keyword id="KW-1185">Reference proteome</keyword>
<keyword id="KW-0678">Repressor</keyword>
<keyword id="KW-0687">Ribonucleoprotein</keyword>
<keyword id="KW-0689">Ribosomal protein</keyword>
<keyword id="KW-0694">RNA-binding</keyword>
<keyword id="KW-0699">rRNA-binding</keyword>
<keyword id="KW-0810">Translation regulation</keyword>
<keyword id="KW-0820">tRNA-binding</keyword>
<reference key="1">
    <citation type="journal article" date="2003" name="J. Bacteriol.">
        <title>Comparative analyses of the complete genome sequences of Pierce's disease and citrus variegated chlorosis strains of Xylella fastidiosa.</title>
        <authorList>
            <person name="Van Sluys M.A."/>
            <person name="de Oliveira M.C."/>
            <person name="Monteiro-Vitorello C.B."/>
            <person name="Miyaki C.Y."/>
            <person name="Furlan L.R."/>
            <person name="Camargo L.E.A."/>
            <person name="da Silva A.C.R."/>
            <person name="Moon D.H."/>
            <person name="Takita M.A."/>
            <person name="Lemos E.G.M."/>
            <person name="Machado M.A."/>
            <person name="Ferro M.I.T."/>
            <person name="da Silva F.R."/>
            <person name="Goldman M.H.S."/>
            <person name="Goldman G.H."/>
            <person name="Lemos M.V.F."/>
            <person name="El-Dorry H."/>
            <person name="Tsai S.M."/>
            <person name="Carrer H."/>
            <person name="Carraro D.M."/>
            <person name="de Oliveira R.C."/>
            <person name="Nunes L.R."/>
            <person name="Siqueira W.J."/>
            <person name="Coutinho L.L."/>
            <person name="Kimura E.T."/>
            <person name="Ferro E.S."/>
            <person name="Harakava R."/>
            <person name="Kuramae E.E."/>
            <person name="Marino C.L."/>
            <person name="Giglioti E."/>
            <person name="Abreu I.L."/>
            <person name="Alves L.M.C."/>
            <person name="do Amaral A.M."/>
            <person name="Baia G.S."/>
            <person name="Blanco S.R."/>
            <person name="Brito M.S."/>
            <person name="Cannavan F.S."/>
            <person name="Celestino A.V."/>
            <person name="da Cunha A.F."/>
            <person name="Fenille R.C."/>
            <person name="Ferro J.A."/>
            <person name="Formighieri E.F."/>
            <person name="Kishi L.T."/>
            <person name="Leoni S.G."/>
            <person name="Oliveira A.R."/>
            <person name="Rosa V.E. Jr."/>
            <person name="Sassaki F.T."/>
            <person name="Sena J.A.D."/>
            <person name="de Souza A.A."/>
            <person name="Truffi D."/>
            <person name="Tsukumo F."/>
            <person name="Yanai G.M."/>
            <person name="Zaros L.G."/>
            <person name="Civerolo E.L."/>
            <person name="Simpson A.J.G."/>
            <person name="Almeida N.F. Jr."/>
            <person name="Setubal J.C."/>
            <person name="Kitajima J.P."/>
        </authorList>
    </citation>
    <scope>NUCLEOTIDE SEQUENCE [LARGE SCALE GENOMIC DNA]</scope>
    <source>
        <strain>Temecula1 / ATCC 700964</strain>
    </source>
</reference>
<gene>
    <name evidence="1" type="primary">rplA</name>
    <name type="ordered locus">PD_2004</name>
</gene>
<proteinExistence type="inferred from homology"/>
<feature type="chain" id="PRO_0000125781" description="Large ribosomal subunit protein uL1">
    <location>
        <begin position="1"/>
        <end position="232"/>
    </location>
</feature>
<comment type="function">
    <text evidence="1">Binds directly to 23S rRNA. The L1 stalk is quite mobile in the ribosome, and is involved in E site tRNA release.</text>
</comment>
<comment type="function">
    <text evidence="1">Protein L1 is also a translational repressor protein, it controls the translation of the L11 operon by binding to its mRNA.</text>
</comment>
<comment type="subunit">
    <text evidence="1">Part of the 50S ribosomal subunit.</text>
</comment>
<comment type="similarity">
    <text evidence="1">Belongs to the universal ribosomal protein uL1 family.</text>
</comment>
<sequence length="232" mass="24378">MVQTKRQKAIDIAVVPGKAYGIDEAIKILKTATKAKFIESVDVAIRLGVDVKKSDQQVRGSTLLPAGTGRDVRVAVFVPSGAKAEDALAAGADAVGMDDLAEKMQAGDLNYDVVIATPDAMRVVGKLGTLLGPRGLMPNPKVGTVSQNPGEAVKNAKSGQVRYRADKAGIIHCVIGKVNFDDEALKLNLQALLVDLIKIKPTASKGTYLQKVSLSSTMGPGVMIDQSTLSLK</sequence>
<protein>
    <recommendedName>
        <fullName evidence="1">Large ribosomal subunit protein uL1</fullName>
    </recommendedName>
    <alternativeName>
        <fullName evidence="2">50S ribosomal protein L1</fullName>
    </alternativeName>
</protein>